<comment type="catalytic activity">
    <reaction evidence="1">
        <text>urea + 2 H2O + H(+) = hydrogencarbonate + 2 NH4(+)</text>
        <dbReference type="Rhea" id="RHEA:20557"/>
        <dbReference type="ChEBI" id="CHEBI:15377"/>
        <dbReference type="ChEBI" id="CHEBI:15378"/>
        <dbReference type="ChEBI" id="CHEBI:16199"/>
        <dbReference type="ChEBI" id="CHEBI:17544"/>
        <dbReference type="ChEBI" id="CHEBI:28938"/>
        <dbReference type="EC" id="3.5.1.5"/>
    </reaction>
</comment>
<comment type="pathway">
    <text evidence="1">Nitrogen metabolism; urea degradation; CO(2) and NH(3) from urea (urease route): step 1/1.</text>
</comment>
<comment type="subunit">
    <text evidence="1">Heterotrimer of UreA (gamma), UreB (beta) and UreC (alpha) subunits. Three heterotrimers associate to form the active enzyme.</text>
</comment>
<comment type="subcellular location">
    <subcellularLocation>
        <location evidence="1">Cytoplasm</location>
    </subcellularLocation>
</comment>
<comment type="similarity">
    <text evidence="1">Belongs to the urease beta subunit family.</text>
</comment>
<gene>
    <name evidence="1" type="primary">ureB</name>
    <name type="ordered locus">Achl_0391</name>
</gene>
<reference key="1">
    <citation type="submission" date="2009-01" db="EMBL/GenBank/DDBJ databases">
        <title>Complete sequence of chromosome of Arthrobacter chlorophenolicus A6.</title>
        <authorList>
            <consortium name="US DOE Joint Genome Institute"/>
            <person name="Lucas S."/>
            <person name="Copeland A."/>
            <person name="Lapidus A."/>
            <person name="Glavina del Rio T."/>
            <person name="Tice H."/>
            <person name="Bruce D."/>
            <person name="Goodwin L."/>
            <person name="Pitluck S."/>
            <person name="Goltsman E."/>
            <person name="Clum A."/>
            <person name="Larimer F."/>
            <person name="Land M."/>
            <person name="Hauser L."/>
            <person name="Kyrpides N."/>
            <person name="Mikhailova N."/>
            <person name="Jansson J."/>
            <person name="Richardson P."/>
        </authorList>
    </citation>
    <scope>NUCLEOTIDE SEQUENCE [LARGE SCALE GENOMIC DNA]</scope>
    <source>
        <strain>ATCC 700700 / DSM 12829 / CIP 107037 / JCM 12360 / KCTC 9906 / NCIMB 13794 / A6</strain>
    </source>
</reference>
<proteinExistence type="inferred from homology"/>
<keyword id="KW-0963">Cytoplasm</keyword>
<keyword id="KW-0378">Hydrolase</keyword>
<organism>
    <name type="scientific">Pseudarthrobacter chlorophenolicus (strain ATCC 700700 / DSM 12829 / CIP 107037 / JCM 12360 / KCTC 9906 / NCIMB 13794 / A6)</name>
    <name type="common">Arthrobacter chlorophenolicus</name>
    <dbReference type="NCBI Taxonomy" id="452863"/>
    <lineage>
        <taxon>Bacteria</taxon>
        <taxon>Bacillati</taxon>
        <taxon>Actinomycetota</taxon>
        <taxon>Actinomycetes</taxon>
        <taxon>Micrococcales</taxon>
        <taxon>Micrococcaceae</taxon>
        <taxon>Pseudarthrobacter</taxon>
    </lineage>
</organism>
<name>URE2_PSECP</name>
<dbReference type="EC" id="3.5.1.5" evidence="1"/>
<dbReference type="EMBL" id="CP001341">
    <property type="protein sequence ID" value="ACL38390.1"/>
    <property type="molecule type" value="Genomic_DNA"/>
</dbReference>
<dbReference type="RefSeq" id="WP_015935617.1">
    <property type="nucleotide sequence ID" value="NC_011886.1"/>
</dbReference>
<dbReference type="SMR" id="B8HA06"/>
<dbReference type="STRING" id="452863.Achl_0391"/>
<dbReference type="KEGG" id="ach:Achl_0391"/>
<dbReference type="eggNOG" id="COG0832">
    <property type="taxonomic scope" value="Bacteria"/>
</dbReference>
<dbReference type="HOGENOM" id="CLU_129707_1_1_11"/>
<dbReference type="OrthoDB" id="9797217at2"/>
<dbReference type="UniPathway" id="UPA00258">
    <property type="reaction ID" value="UER00370"/>
</dbReference>
<dbReference type="Proteomes" id="UP000002505">
    <property type="component" value="Chromosome"/>
</dbReference>
<dbReference type="GO" id="GO:0035550">
    <property type="term" value="C:urease complex"/>
    <property type="evidence" value="ECO:0007669"/>
    <property type="project" value="InterPro"/>
</dbReference>
<dbReference type="GO" id="GO:0009039">
    <property type="term" value="F:urease activity"/>
    <property type="evidence" value="ECO:0007669"/>
    <property type="project" value="UniProtKB-UniRule"/>
</dbReference>
<dbReference type="GO" id="GO:0043419">
    <property type="term" value="P:urea catabolic process"/>
    <property type="evidence" value="ECO:0007669"/>
    <property type="project" value="UniProtKB-UniRule"/>
</dbReference>
<dbReference type="CDD" id="cd00407">
    <property type="entry name" value="Urease_beta"/>
    <property type="match status" value="1"/>
</dbReference>
<dbReference type="FunFam" id="2.10.150.10:FF:000001">
    <property type="entry name" value="Urease subunit beta"/>
    <property type="match status" value="1"/>
</dbReference>
<dbReference type="Gene3D" id="2.10.150.10">
    <property type="entry name" value="Urease, beta subunit"/>
    <property type="match status" value="1"/>
</dbReference>
<dbReference type="HAMAP" id="MF_01954">
    <property type="entry name" value="Urease_beta"/>
    <property type="match status" value="1"/>
</dbReference>
<dbReference type="InterPro" id="IPR002019">
    <property type="entry name" value="Urease_beta-like"/>
</dbReference>
<dbReference type="InterPro" id="IPR036461">
    <property type="entry name" value="Urease_betasu_sf"/>
</dbReference>
<dbReference type="InterPro" id="IPR050069">
    <property type="entry name" value="Urease_subunit"/>
</dbReference>
<dbReference type="NCBIfam" id="NF009682">
    <property type="entry name" value="PRK13203.1"/>
    <property type="match status" value="1"/>
</dbReference>
<dbReference type="NCBIfam" id="TIGR00192">
    <property type="entry name" value="urease_beta"/>
    <property type="match status" value="1"/>
</dbReference>
<dbReference type="PANTHER" id="PTHR33569">
    <property type="entry name" value="UREASE"/>
    <property type="match status" value="1"/>
</dbReference>
<dbReference type="PANTHER" id="PTHR33569:SF1">
    <property type="entry name" value="UREASE"/>
    <property type="match status" value="1"/>
</dbReference>
<dbReference type="Pfam" id="PF00699">
    <property type="entry name" value="Urease_beta"/>
    <property type="match status" value="1"/>
</dbReference>
<dbReference type="SUPFAM" id="SSF51278">
    <property type="entry name" value="Urease, beta-subunit"/>
    <property type="match status" value="1"/>
</dbReference>
<accession>B8HA06</accession>
<feature type="chain" id="PRO_1000188912" description="Urease subunit beta">
    <location>
        <begin position="1"/>
        <end position="117"/>
    </location>
</feature>
<feature type="region of interest" description="Disordered" evidence="2">
    <location>
        <begin position="95"/>
        <end position="117"/>
    </location>
</feature>
<sequence>MIPGEYVLRPEPVTANAGRDAIELSVTNTGDRPVQVGSHFHFAEANAALDFDRAAARGRRLDIPAGTAARFEPGDSRSVRLIELAGSREVFGLSNAVNGKLDGGPHPGVPATERGAK</sequence>
<evidence type="ECO:0000255" key="1">
    <source>
        <dbReference type="HAMAP-Rule" id="MF_01954"/>
    </source>
</evidence>
<evidence type="ECO:0000256" key="2">
    <source>
        <dbReference type="SAM" id="MobiDB-lite"/>
    </source>
</evidence>
<protein>
    <recommendedName>
        <fullName evidence="1">Urease subunit beta</fullName>
        <ecNumber evidence="1">3.5.1.5</ecNumber>
    </recommendedName>
    <alternativeName>
        <fullName evidence="1">Urea amidohydrolase subunit beta</fullName>
    </alternativeName>
</protein>